<keyword id="KW-0240">DNA-directed RNA polymerase</keyword>
<keyword id="KW-0548">Nucleotidyltransferase</keyword>
<keyword id="KW-0804">Transcription</keyword>
<keyword id="KW-0808">Transferase</keyword>
<dbReference type="EC" id="2.7.7.6" evidence="1"/>
<dbReference type="EMBL" id="CP001336">
    <property type="protein sequence ID" value="ACL18481.1"/>
    <property type="molecule type" value="Genomic_DNA"/>
</dbReference>
<dbReference type="RefSeq" id="WP_015942749.1">
    <property type="nucleotide sequence ID" value="NC_011830.1"/>
</dbReference>
<dbReference type="SMR" id="B8G1V8"/>
<dbReference type="KEGG" id="dhd:Dhaf_0414"/>
<dbReference type="HOGENOM" id="CLU_000524_4_1_9"/>
<dbReference type="Proteomes" id="UP000007726">
    <property type="component" value="Chromosome"/>
</dbReference>
<dbReference type="GO" id="GO:0000428">
    <property type="term" value="C:DNA-directed RNA polymerase complex"/>
    <property type="evidence" value="ECO:0007669"/>
    <property type="project" value="UniProtKB-KW"/>
</dbReference>
<dbReference type="GO" id="GO:0003677">
    <property type="term" value="F:DNA binding"/>
    <property type="evidence" value="ECO:0007669"/>
    <property type="project" value="UniProtKB-UniRule"/>
</dbReference>
<dbReference type="GO" id="GO:0003899">
    <property type="term" value="F:DNA-directed RNA polymerase activity"/>
    <property type="evidence" value="ECO:0007669"/>
    <property type="project" value="UniProtKB-UniRule"/>
</dbReference>
<dbReference type="GO" id="GO:0032549">
    <property type="term" value="F:ribonucleoside binding"/>
    <property type="evidence" value="ECO:0007669"/>
    <property type="project" value="InterPro"/>
</dbReference>
<dbReference type="GO" id="GO:0006351">
    <property type="term" value="P:DNA-templated transcription"/>
    <property type="evidence" value="ECO:0007669"/>
    <property type="project" value="UniProtKB-UniRule"/>
</dbReference>
<dbReference type="CDD" id="cd00653">
    <property type="entry name" value="RNA_pol_B_RPB2"/>
    <property type="match status" value="1"/>
</dbReference>
<dbReference type="FunFam" id="3.90.1800.10:FF:000001">
    <property type="entry name" value="DNA-directed RNA polymerase subunit beta"/>
    <property type="match status" value="1"/>
</dbReference>
<dbReference type="Gene3D" id="2.40.50.100">
    <property type="match status" value="1"/>
</dbReference>
<dbReference type="Gene3D" id="2.40.50.150">
    <property type="match status" value="1"/>
</dbReference>
<dbReference type="Gene3D" id="3.90.1100.10">
    <property type="match status" value="1"/>
</dbReference>
<dbReference type="Gene3D" id="2.30.150.10">
    <property type="entry name" value="DNA-directed RNA polymerase, beta subunit, external 1 domain"/>
    <property type="match status" value="1"/>
</dbReference>
<dbReference type="Gene3D" id="2.40.270.10">
    <property type="entry name" value="DNA-directed RNA polymerase, subunit 2, domain 6"/>
    <property type="match status" value="2"/>
</dbReference>
<dbReference type="Gene3D" id="3.90.1800.10">
    <property type="entry name" value="RNA polymerase alpha subunit dimerisation domain"/>
    <property type="match status" value="1"/>
</dbReference>
<dbReference type="Gene3D" id="3.90.1110.10">
    <property type="entry name" value="RNA polymerase Rpb2, domain 2"/>
    <property type="match status" value="1"/>
</dbReference>
<dbReference type="HAMAP" id="MF_01321">
    <property type="entry name" value="RNApol_bact_RpoB"/>
    <property type="match status" value="1"/>
</dbReference>
<dbReference type="InterPro" id="IPR042107">
    <property type="entry name" value="DNA-dir_RNA_pol_bsu_ext_1_sf"/>
</dbReference>
<dbReference type="InterPro" id="IPR019462">
    <property type="entry name" value="DNA-dir_RNA_pol_bsu_external_1"/>
</dbReference>
<dbReference type="InterPro" id="IPR015712">
    <property type="entry name" value="DNA-dir_RNA_pol_su2"/>
</dbReference>
<dbReference type="InterPro" id="IPR007120">
    <property type="entry name" value="DNA-dir_RNAP_su2_dom"/>
</dbReference>
<dbReference type="InterPro" id="IPR037033">
    <property type="entry name" value="DNA-dir_RNAP_su2_hyb_sf"/>
</dbReference>
<dbReference type="InterPro" id="IPR010243">
    <property type="entry name" value="RNA_pol_bsu_bac"/>
</dbReference>
<dbReference type="InterPro" id="IPR007121">
    <property type="entry name" value="RNA_pol_bsu_CS"/>
</dbReference>
<dbReference type="InterPro" id="IPR007644">
    <property type="entry name" value="RNA_pol_bsu_protrusion"/>
</dbReference>
<dbReference type="InterPro" id="IPR007642">
    <property type="entry name" value="RNA_pol_Rpb2_2"/>
</dbReference>
<dbReference type="InterPro" id="IPR037034">
    <property type="entry name" value="RNA_pol_Rpb2_2_sf"/>
</dbReference>
<dbReference type="InterPro" id="IPR007645">
    <property type="entry name" value="RNA_pol_Rpb2_3"/>
</dbReference>
<dbReference type="InterPro" id="IPR007641">
    <property type="entry name" value="RNA_pol_Rpb2_7"/>
</dbReference>
<dbReference type="InterPro" id="IPR014724">
    <property type="entry name" value="RNA_pol_RPB2_OB-fold"/>
</dbReference>
<dbReference type="NCBIfam" id="NF001616">
    <property type="entry name" value="PRK00405.1"/>
    <property type="match status" value="1"/>
</dbReference>
<dbReference type="NCBIfam" id="TIGR02013">
    <property type="entry name" value="rpoB"/>
    <property type="match status" value="1"/>
</dbReference>
<dbReference type="PANTHER" id="PTHR20856">
    <property type="entry name" value="DNA-DIRECTED RNA POLYMERASE I SUBUNIT 2"/>
    <property type="match status" value="1"/>
</dbReference>
<dbReference type="Pfam" id="PF04563">
    <property type="entry name" value="RNA_pol_Rpb2_1"/>
    <property type="match status" value="1"/>
</dbReference>
<dbReference type="Pfam" id="PF04561">
    <property type="entry name" value="RNA_pol_Rpb2_2"/>
    <property type="match status" value="1"/>
</dbReference>
<dbReference type="Pfam" id="PF04565">
    <property type="entry name" value="RNA_pol_Rpb2_3"/>
    <property type="match status" value="1"/>
</dbReference>
<dbReference type="Pfam" id="PF10385">
    <property type="entry name" value="RNA_pol_Rpb2_45"/>
    <property type="match status" value="1"/>
</dbReference>
<dbReference type="Pfam" id="PF00562">
    <property type="entry name" value="RNA_pol_Rpb2_6"/>
    <property type="match status" value="1"/>
</dbReference>
<dbReference type="Pfam" id="PF04560">
    <property type="entry name" value="RNA_pol_Rpb2_7"/>
    <property type="match status" value="1"/>
</dbReference>
<dbReference type="SUPFAM" id="SSF64484">
    <property type="entry name" value="beta and beta-prime subunits of DNA dependent RNA-polymerase"/>
    <property type="match status" value="1"/>
</dbReference>
<dbReference type="PROSITE" id="PS01166">
    <property type="entry name" value="RNA_POL_BETA"/>
    <property type="match status" value="1"/>
</dbReference>
<sequence>MFYPVKVGTRERWSYSRIREVLDMPNLIEIQQNSYQWFLDEGLREMFRDISPIQDFTGNLVLEFIDYSLGEPKYEVEECKERDVTYAAPLRVKVRLINKETGEVKEQEVFMGDFPLMTTKGTFIINGAERVIVSQLVRSPGVYYSESIDPSGKKVFGATVIPNRGAWLEFETDVNDNIFVRVDRTRKLPATVLIRALGYATNGQIAELFDDNEHIRITLERDNTESAEEALVEIYKRLRPGEPPTVDSARSLLEALFFDPKRYDLAKVGRYKLNKKLKLSVPTDVHHLTKEDIVASLRQMLTLMSGEGHKDDIDHLGNRRLRSVGELLQNQFRIGLSRMERVVRERMTIQDVDVITPQVLINIRPVVAAIKEFFGSSQLSQFMDQTNPLAELTHKRRLSALGPGGLSRERAGFEVRDVHHSHYGRMCPIETPEGPNIGLIGSLSTYGRINPYGFIEAPYRKVNNGQVTDQIDYLTADEEEKFVVAQANAPLTDDGHFIEEKIDGRHGPDFVLVAPERIDYMDVSPKQMVSIATALIPFLEHDDANRALMGANMQRQAVPLLRTDAPYVGTGMEYKAAKDSGVCVLASKDGTVERATAEDIIIRHDDGTLEKHKLLKYLRSNQGTCINQRPIVMKNERVEAGQIIADGPSTDHGELALGRNVLIAFMTWEGYNYEDAILISEKLVKEDYYTSIHIEEYEADARDTKLGPEEITRDIPNVGEDVLKDLDERGIIRIGAEVSTGDILVGKVTPKGETELTAEERLLRAIFGEKAREVRDTSLRVPHGEAGKIVDVKVFTRENGDELAPGVNELVRVYIAQKRKISVGDKMAGRHGNKGVISRIMKQEDMPFLPDGTPVEIVLNPLGVPSRMNIGQVMETHLGWAAKALGLRLATPVFDGAQEEDVFATLRKAGLPETGKTVLYDGRTGDPFDNKITVGYMYFLKLHHLVDDKIHARSTGPYSLVTQQPLGGKAQFGGQRFGEMEVWALEAYGAAYTLQEILTVKSDDVVGRVKTYEAIVKGENIPEPGVPESFKVLIKELQSLGLDVRVLSENDEEIEIREIDEDVTETAKELGIDLHEDLPAPVIHEAGEGEDDEYFEEDEEAVDDEPMTFDDDDME</sequence>
<evidence type="ECO:0000255" key="1">
    <source>
        <dbReference type="HAMAP-Rule" id="MF_01321"/>
    </source>
</evidence>
<evidence type="ECO:0000256" key="2">
    <source>
        <dbReference type="SAM" id="MobiDB-lite"/>
    </source>
</evidence>
<accession>B8G1V8</accession>
<proteinExistence type="inferred from homology"/>
<name>RPOB_DESHD</name>
<feature type="chain" id="PRO_1000165803" description="DNA-directed RNA polymerase subunit beta">
    <location>
        <begin position="1"/>
        <end position="1115"/>
    </location>
</feature>
<feature type="region of interest" description="Disordered" evidence="2">
    <location>
        <begin position="1084"/>
        <end position="1115"/>
    </location>
</feature>
<feature type="compositionally biased region" description="Acidic residues" evidence="2">
    <location>
        <begin position="1088"/>
        <end position="1115"/>
    </location>
</feature>
<gene>
    <name evidence="1" type="primary">rpoB</name>
    <name type="ordered locus">Dhaf_0414</name>
</gene>
<protein>
    <recommendedName>
        <fullName evidence="1">DNA-directed RNA polymerase subunit beta</fullName>
        <shortName evidence="1">RNAP subunit beta</shortName>
        <ecNumber evidence="1">2.7.7.6</ecNumber>
    </recommendedName>
    <alternativeName>
        <fullName evidence="1">RNA polymerase subunit beta</fullName>
    </alternativeName>
    <alternativeName>
        <fullName evidence="1">Transcriptase subunit beta</fullName>
    </alternativeName>
</protein>
<reference key="1">
    <citation type="journal article" date="2012" name="BMC Microbiol.">
        <title>Genome sequence of Desulfitobacterium hafniense DCB-2, a Gram-positive anaerobe capable of dehalogenation and metal reduction.</title>
        <authorList>
            <person name="Kim S.H."/>
            <person name="Harzman C."/>
            <person name="Davis J.K."/>
            <person name="Hutcheson R."/>
            <person name="Broderick J.B."/>
            <person name="Marsh T.L."/>
            <person name="Tiedje J.M."/>
        </authorList>
    </citation>
    <scope>NUCLEOTIDE SEQUENCE [LARGE SCALE GENOMIC DNA]</scope>
    <source>
        <strain>DSM 10664 / DCB-2</strain>
    </source>
</reference>
<comment type="function">
    <text evidence="1">DNA-dependent RNA polymerase catalyzes the transcription of DNA into RNA using the four ribonucleoside triphosphates as substrates.</text>
</comment>
<comment type="catalytic activity">
    <reaction evidence="1">
        <text>RNA(n) + a ribonucleoside 5'-triphosphate = RNA(n+1) + diphosphate</text>
        <dbReference type="Rhea" id="RHEA:21248"/>
        <dbReference type="Rhea" id="RHEA-COMP:14527"/>
        <dbReference type="Rhea" id="RHEA-COMP:17342"/>
        <dbReference type="ChEBI" id="CHEBI:33019"/>
        <dbReference type="ChEBI" id="CHEBI:61557"/>
        <dbReference type="ChEBI" id="CHEBI:140395"/>
        <dbReference type="EC" id="2.7.7.6"/>
    </reaction>
</comment>
<comment type="subunit">
    <text evidence="1">The RNAP catalytic core consists of 2 alpha, 1 beta, 1 beta' and 1 omega subunit. When a sigma factor is associated with the core the holoenzyme is formed, which can initiate transcription.</text>
</comment>
<comment type="similarity">
    <text evidence="1">Belongs to the RNA polymerase beta chain family.</text>
</comment>
<organism>
    <name type="scientific">Desulfitobacterium hafniense (strain DSM 10664 / DCB-2)</name>
    <dbReference type="NCBI Taxonomy" id="272564"/>
    <lineage>
        <taxon>Bacteria</taxon>
        <taxon>Bacillati</taxon>
        <taxon>Bacillota</taxon>
        <taxon>Clostridia</taxon>
        <taxon>Eubacteriales</taxon>
        <taxon>Desulfitobacteriaceae</taxon>
        <taxon>Desulfitobacterium</taxon>
    </lineage>
</organism>